<protein>
    <recommendedName>
        <fullName evidence="1">Tyrosine--tRNA ligase</fullName>
        <ecNumber evidence="1">6.1.1.1</ecNumber>
    </recommendedName>
    <alternativeName>
        <fullName evidence="1">Tyrosyl-tRNA synthetase</fullName>
        <shortName evidence="1">TyrRS</shortName>
    </alternativeName>
</protein>
<accession>C4ZYA0</accession>
<proteinExistence type="inferred from homology"/>
<organism>
    <name type="scientific">Escherichia coli (strain K12 / MC4100 / BW2952)</name>
    <dbReference type="NCBI Taxonomy" id="595496"/>
    <lineage>
        <taxon>Bacteria</taxon>
        <taxon>Pseudomonadati</taxon>
        <taxon>Pseudomonadota</taxon>
        <taxon>Gammaproteobacteria</taxon>
        <taxon>Enterobacterales</taxon>
        <taxon>Enterobacteriaceae</taxon>
        <taxon>Escherichia</taxon>
    </lineage>
</organism>
<comment type="function">
    <text evidence="1">Catalyzes the attachment of tyrosine to tRNA(Tyr) in a two-step reaction: tyrosine is first activated by ATP to form Tyr-AMP and then transferred to the acceptor end of tRNA(Tyr).</text>
</comment>
<comment type="catalytic activity">
    <reaction evidence="1">
        <text>tRNA(Tyr) + L-tyrosine + ATP = L-tyrosyl-tRNA(Tyr) + AMP + diphosphate + H(+)</text>
        <dbReference type="Rhea" id="RHEA:10220"/>
        <dbReference type="Rhea" id="RHEA-COMP:9706"/>
        <dbReference type="Rhea" id="RHEA-COMP:9707"/>
        <dbReference type="ChEBI" id="CHEBI:15378"/>
        <dbReference type="ChEBI" id="CHEBI:30616"/>
        <dbReference type="ChEBI" id="CHEBI:33019"/>
        <dbReference type="ChEBI" id="CHEBI:58315"/>
        <dbReference type="ChEBI" id="CHEBI:78442"/>
        <dbReference type="ChEBI" id="CHEBI:78536"/>
        <dbReference type="ChEBI" id="CHEBI:456215"/>
        <dbReference type="EC" id="6.1.1.1"/>
    </reaction>
</comment>
<comment type="subunit">
    <text evidence="1">Homodimer.</text>
</comment>
<comment type="subcellular location">
    <subcellularLocation>
        <location evidence="1">Cytoplasm</location>
    </subcellularLocation>
</comment>
<comment type="similarity">
    <text evidence="1">Belongs to the class-I aminoacyl-tRNA synthetase family. TyrS type 1 subfamily.</text>
</comment>
<evidence type="ECO:0000255" key="1">
    <source>
        <dbReference type="HAMAP-Rule" id="MF_02006"/>
    </source>
</evidence>
<keyword id="KW-0007">Acetylation</keyword>
<keyword id="KW-0030">Aminoacyl-tRNA synthetase</keyword>
<keyword id="KW-0067">ATP-binding</keyword>
<keyword id="KW-0963">Cytoplasm</keyword>
<keyword id="KW-0436">Ligase</keyword>
<keyword id="KW-0547">Nucleotide-binding</keyword>
<keyword id="KW-0648">Protein biosynthesis</keyword>
<keyword id="KW-0694">RNA-binding</keyword>
<feature type="chain" id="PRO_1000216272" description="Tyrosine--tRNA ligase">
    <location>
        <begin position="1"/>
        <end position="424"/>
    </location>
</feature>
<feature type="domain" description="S4 RNA-binding" evidence="1">
    <location>
        <begin position="357"/>
        <end position="414"/>
    </location>
</feature>
<feature type="short sequence motif" description="'HIGH' region">
    <location>
        <begin position="42"/>
        <end position="51"/>
    </location>
</feature>
<feature type="short sequence motif" description="'KMSKS' region">
    <location>
        <begin position="235"/>
        <end position="239"/>
    </location>
</feature>
<feature type="binding site" evidence="1">
    <location>
        <position position="37"/>
    </location>
    <ligand>
        <name>L-tyrosine</name>
        <dbReference type="ChEBI" id="CHEBI:58315"/>
    </ligand>
</feature>
<feature type="binding site" evidence="1">
    <location>
        <position position="175"/>
    </location>
    <ligand>
        <name>L-tyrosine</name>
        <dbReference type="ChEBI" id="CHEBI:58315"/>
    </ligand>
</feature>
<feature type="binding site" evidence="1">
    <location>
        <position position="179"/>
    </location>
    <ligand>
        <name>L-tyrosine</name>
        <dbReference type="ChEBI" id="CHEBI:58315"/>
    </ligand>
</feature>
<feature type="binding site" evidence="1">
    <location>
        <position position="238"/>
    </location>
    <ligand>
        <name>ATP</name>
        <dbReference type="ChEBI" id="CHEBI:30616"/>
    </ligand>
</feature>
<feature type="modified residue" description="N6-acetyllysine" evidence="1">
    <location>
        <position position="144"/>
    </location>
</feature>
<dbReference type="EC" id="6.1.1.1" evidence="1"/>
<dbReference type="EMBL" id="CP001396">
    <property type="protein sequence ID" value="ACR65731.1"/>
    <property type="molecule type" value="Genomic_DNA"/>
</dbReference>
<dbReference type="RefSeq" id="WP_001295400.1">
    <property type="nucleotide sequence ID" value="NC_012759.1"/>
</dbReference>
<dbReference type="SMR" id="C4ZYA0"/>
<dbReference type="GeneID" id="93775791"/>
<dbReference type="KEGG" id="ebw:BWG_1452"/>
<dbReference type="HOGENOM" id="CLU_024003_0_3_6"/>
<dbReference type="GO" id="GO:0005829">
    <property type="term" value="C:cytosol"/>
    <property type="evidence" value="ECO:0007669"/>
    <property type="project" value="TreeGrafter"/>
</dbReference>
<dbReference type="GO" id="GO:0005524">
    <property type="term" value="F:ATP binding"/>
    <property type="evidence" value="ECO:0007669"/>
    <property type="project" value="UniProtKB-UniRule"/>
</dbReference>
<dbReference type="GO" id="GO:0003723">
    <property type="term" value="F:RNA binding"/>
    <property type="evidence" value="ECO:0007669"/>
    <property type="project" value="UniProtKB-KW"/>
</dbReference>
<dbReference type="GO" id="GO:0004831">
    <property type="term" value="F:tyrosine-tRNA ligase activity"/>
    <property type="evidence" value="ECO:0007669"/>
    <property type="project" value="UniProtKB-UniRule"/>
</dbReference>
<dbReference type="GO" id="GO:0006437">
    <property type="term" value="P:tyrosyl-tRNA aminoacylation"/>
    <property type="evidence" value="ECO:0007669"/>
    <property type="project" value="UniProtKB-UniRule"/>
</dbReference>
<dbReference type="CDD" id="cd00165">
    <property type="entry name" value="S4"/>
    <property type="match status" value="1"/>
</dbReference>
<dbReference type="CDD" id="cd00805">
    <property type="entry name" value="TyrRS_core"/>
    <property type="match status" value="1"/>
</dbReference>
<dbReference type="FunFam" id="1.10.240.10:FF:000001">
    <property type="entry name" value="Tyrosine--tRNA ligase"/>
    <property type="match status" value="1"/>
</dbReference>
<dbReference type="FunFam" id="3.10.290.10:FF:000007">
    <property type="entry name" value="Tyrosine--tRNA ligase"/>
    <property type="match status" value="1"/>
</dbReference>
<dbReference type="FunFam" id="3.40.50.620:FF:000008">
    <property type="entry name" value="Tyrosine--tRNA ligase"/>
    <property type="match status" value="1"/>
</dbReference>
<dbReference type="Gene3D" id="3.40.50.620">
    <property type="entry name" value="HUPs"/>
    <property type="match status" value="1"/>
</dbReference>
<dbReference type="Gene3D" id="3.10.290.10">
    <property type="entry name" value="RNA-binding S4 domain"/>
    <property type="match status" value="1"/>
</dbReference>
<dbReference type="Gene3D" id="1.10.240.10">
    <property type="entry name" value="Tyrosyl-Transfer RNA Synthetase"/>
    <property type="match status" value="1"/>
</dbReference>
<dbReference type="HAMAP" id="MF_02006">
    <property type="entry name" value="Tyr_tRNA_synth_type1"/>
    <property type="match status" value="1"/>
</dbReference>
<dbReference type="InterPro" id="IPR001412">
    <property type="entry name" value="aa-tRNA-synth_I_CS"/>
</dbReference>
<dbReference type="InterPro" id="IPR002305">
    <property type="entry name" value="aa-tRNA-synth_Ic"/>
</dbReference>
<dbReference type="InterPro" id="IPR014729">
    <property type="entry name" value="Rossmann-like_a/b/a_fold"/>
</dbReference>
<dbReference type="InterPro" id="IPR002942">
    <property type="entry name" value="S4_RNA-bd"/>
</dbReference>
<dbReference type="InterPro" id="IPR036986">
    <property type="entry name" value="S4_RNA-bd_sf"/>
</dbReference>
<dbReference type="InterPro" id="IPR054608">
    <property type="entry name" value="SYY-like_C"/>
</dbReference>
<dbReference type="InterPro" id="IPR002307">
    <property type="entry name" value="Tyr-tRNA-ligase"/>
</dbReference>
<dbReference type="InterPro" id="IPR024088">
    <property type="entry name" value="Tyr-tRNA-ligase_bac-type"/>
</dbReference>
<dbReference type="InterPro" id="IPR024107">
    <property type="entry name" value="Tyr-tRNA-ligase_bac_1"/>
</dbReference>
<dbReference type="NCBIfam" id="TIGR00234">
    <property type="entry name" value="tyrS"/>
    <property type="match status" value="1"/>
</dbReference>
<dbReference type="PANTHER" id="PTHR11766:SF0">
    <property type="entry name" value="TYROSINE--TRNA LIGASE, MITOCHONDRIAL"/>
    <property type="match status" value="1"/>
</dbReference>
<dbReference type="PANTHER" id="PTHR11766">
    <property type="entry name" value="TYROSYL-TRNA SYNTHETASE"/>
    <property type="match status" value="1"/>
</dbReference>
<dbReference type="Pfam" id="PF22421">
    <property type="entry name" value="SYY_C-terminal"/>
    <property type="match status" value="1"/>
</dbReference>
<dbReference type="Pfam" id="PF00579">
    <property type="entry name" value="tRNA-synt_1b"/>
    <property type="match status" value="1"/>
</dbReference>
<dbReference type="PRINTS" id="PR01040">
    <property type="entry name" value="TRNASYNTHTYR"/>
</dbReference>
<dbReference type="SMART" id="SM00363">
    <property type="entry name" value="S4"/>
    <property type="match status" value="1"/>
</dbReference>
<dbReference type="SUPFAM" id="SSF55174">
    <property type="entry name" value="Alpha-L RNA-binding motif"/>
    <property type="match status" value="1"/>
</dbReference>
<dbReference type="SUPFAM" id="SSF52374">
    <property type="entry name" value="Nucleotidylyl transferase"/>
    <property type="match status" value="1"/>
</dbReference>
<dbReference type="PROSITE" id="PS00178">
    <property type="entry name" value="AA_TRNA_LIGASE_I"/>
    <property type="match status" value="1"/>
</dbReference>
<dbReference type="PROSITE" id="PS50889">
    <property type="entry name" value="S4"/>
    <property type="match status" value="1"/>
</dbReference>
<gene>
    <name evidence="1" type="primary">tyrS</name>
    <name type="ordered locus">BWG_1452</name>
</gene>
<reference key="1">
    <citation type="journal article" date="2009" name="J. Bacteriol.">
        <title>Genomic sequencing reveals regulatory mutations and recombinational events in the widely used MC4100 lineage of Escherichia coli K-12.</title>
        <authorList>
            <person name="Ferenci T."/>
            <person name="Zhou Z."/>
            <person name="Betteridge T."/>
            <person name="Ren Y."/>
            <person name="Liu Y."/>
            <person name="Feng L."/>
            <person name="Reeves P.R."/>
            <person name="Wang L."/>
        </authorList>
    </citation>
    <scope>NUCLEOTIDE SEQUENCE [LARGE SCALE GENOMIC DNA]</scope>
    <source>
        <strain>K12 / MC4100 / BW2952</strain>
    </source>
</reference>
<name>SYY_ECOBW</name>
<sequence length="424" mass="47527">MASSNLIKQLQERGLVAQVTDEEALAERLAQGPIALYCGFDPTADSLHLGHLVPLLCLKRFQQAGHKPVALVGGATGLIGDPSFKAAERKLNTEETVQEWVDKIRKQVAPFLDFDCGENSAIAANNYDWFGNMNVLTFLRDIGKHFSVNQMINKEAVKQRLNREDQGISFTEFSYNLLQGYDFACLNKQYGVVLQIGGSDQWGNITSGIDLTRRLHQNQVFGLTVPLITKADGTKFGKTEGGAVWLDPKKTSPYKFYQFWINTADADVYRFLKFFTFMSIEEINALEEEDKNSGKAPRAQYVLAEQVTRLVHGEEGLQAAKRITECLFSGSLSALSEADFEQLAQDGVPMVEMEKGADLMQALVDSELQPSRGQARKTIASNAITINGEKQSDPEYFFKEEDRLFGRFTLLRRGKKNYCLICWK</sequence>